<accession>Q9ZD53</accession>
<organism>
    <name type="scientific">Rickettsia prowazekii (strain Madrid E)</name>
    <dbReference type="NCBI Taxonomy" id="272947"/>
    <lineage>
        <taxon>Bacteria</taxon>
        <taxon>Pseudomonadati</taxon>
        <taxon>Pseudomonadota</taxon>
        <taxon>Alphaproteobacteria</taxon>
        <taxon>Rickettsiales</taxon>
        <taxon>Rickettsiaceae</taxon>
        <taxon>Rickettsieae</taxon>
        <taxon>Rickettsia</taxon>
        <taxon>typhus group</taxon>
    </lineage>
</organism>
<protein>
    <recommendedName>
        <fullName>Purine nucleoside phosphorylase RP494</fullName>
        <ecNumber evidence="2">2.4.2.1</ecNumber>
    </recommendedName>
    <alternativeName>
        <fullName>Adenosine deaminase RP494</fullName>
        <ecNumber evidence="2">3.5.4.4</ecNumber>
    </alternativeName>
    <alternativeName>
        <fullName>S-methyl-5'-thioadenosine phosphorylase RP494</fullName>
        <ecNumber evidence="2">2.4.2.28</ecNumber>
    </alternativeName>
</protein>
<evidence type="ECO:0000250" key="1">
    <source>
        <dbReference type="UniProtKB" id="P33644"/>
    </source>
</evidence>
<evidence type="ECO:0000250" key="2">
    <source>
        <dbReference type="UniProtKB" id="P84138"/>
    </source>
</evidence>
<evidence type="ECO:0000250" key="3">
    <source>
        <dbReference type="UniProtKB" id="Q1EIR0"/>
    </source>
</evidence>
<evidence type="ECO:0000305" key="4"/>
<feature type="chain" id="PRO_0000163170" description="Purine nucleoside phosphorylase RP494">
    <location>
        <begin position="1"/>
        <end position="240"/>
    </location>
</feature>
<feature type="binding site" evidence="2">
    <location>
        <position position="60"/>
    </location>
    <ligand>
        <name>Zn(2+)</name>
        <dbReference type="ChEBI" id="CHEBI:29105"/>
        <note>catalytic</note>
    </ligand>
</feature>
<feature type="binding site" evidence="2">
    <location>
        <position position="96"/>
    </location>
    <ligand>
        <name>Zn(2+)</name>
        <dbReference type="ChEBI" id="CHEBI:29105"/>
        <note>catalytic</note>
    </ligand>
</feature>
<feature type="binding site" evidence="2">
    <location>
        <position position="113"/>
    </location>
    <ligand>
        <name>Zn(2+)</name>
        <dbReference type="ChEBI" id="CHEBI:29105"/>
        <note>catalytic</note>
    </ligand>
</feature>
<reference key="1">
    <citation type="journal article" date="1998" name="Nature">
        <title>The genome sequence of Rickettsia prowazekii and the origin of mitochondria.</title>
        <authorList>
            <person name="Andersson S.G.E."/>
            <person name="Zomorodipour A."/>
            <person name="Andersson J.O."/>
            <person name="Sicheritz-Ponten T."/>
            <person name="Alsmark U.C.M."/>
            <person name="Podowski R.M."/>
            <person name="Naeslund A.K."/>
            <person name="Eriksson A.-S."/>
            <person name="Winkler H.H."/>
            <person name="Kurland C.G."/>
        </authorList>
    </citation>
    <scope>NUCLEOTIDE SEQUENCE [LARGE SCALE GENOMIC DNA]</scope>
    <source>
        <strain>Madrid E</strain>
    </source>
</reference>
<dbReference type="EC" id="2.4.2.1" evidence="2"/>
<dbReference type="EC" id="3.5.4.4" evidence="2"/>
<dbReference type="EC" id="2.4.2.28" evidence="2"/>
<dbReference type="EMBL" id="AJ235272">
    <property type="protein sequence ID" value="CAA14946.1"/>
    <property type="molecule type" value="Genomic_DNA"/>
</dbReference>
<dbReference type="PIR" id="H71652">
    <property type="entry name" value="H71652"/>
</dbReference>
<dbReference type="RefSeq" id="NP_220870.1">
    <property type="nucleotide sequence ID" value="NC_000963.1"/>
</dbReference>
<dbReference type="SMR" id="Q9ZD53"/>
<dbReference type="STRING" id="272947.gene:17555574"/>
<dbReference type="EnsemblBacteria" id="CAA14946">
    <property type="protein sequence ID" value="CAA14946"/>
    <property type="gene ID" value="CAA14946"/>
</dbReference>
<dbReference type="KEGG" id="rpr:RP494"/>
<dbReference type="PATRIC" id="fig|272947.5.peg.503"/>
<dbReference type="eggNOG" id="COG1496">
    <property type="taxonomic scope" value="Bacteria"/>
</dbReference>
<dbReference type="HOGENOM" id="CLU_065784_2_0_5"/>
<dbReference type="OrthoDB" id="4279at2"/>
<dbReference type="Proteomes" id="UP000002480">
    <property type="component" value="Chromosome"/>
</dbReference>
<dbReference type="GO" id="GO:0004000">
    <property type="term" value="F:adenosine deaminase activity"/>
    <property type="evidence" value="ECO:0007669"/>
    <property type="project" value="RHEA"/>
</dbReference>
<dbReference type="GO" id="GO:0005507">
    <property type="term" value="F:copper ion binding"/>
    <property type="evidence" value="ECO:0007669"/>
    <property type="project" value="TreeGrafter"/>
</dbReference>
<dbReference type="GO" id="GO:0016491">
    <property type="term" value="F:oxidoreductase activity"/>
    <property type="evidence" value="ECO:0007669"/>
    <property type="project" value="UniProtKB-KW"/>
</dbReference>
<dbReference type="GO" id="GO:0017061">
    <property type="term" value="F:S-methyl-5-thioadenosine phosphorylase activity"/>
    <property type="evidence" value="ECO:0007669"/>
    <property type="project" value="UniProtKB-EC"/>
</dbReference>
<dbReference type="CDD" id="cd16833">
    <property type="entry name" value="YfiH"/>
    <property type="match status" value="1"/>
</dbReference>
<dbReference type="Gene3D" id="3.60.140.10">
    <property type="entry name" value="CNF1/YfiH-like putative cysteine hydrolases"/>
    <property type="match status" value="1"/>
</dbReference>
<dbReference type="InterPro" id="IPR003730">
    <property type="entry name" value="Cu_polyphenol_OxRdtase"/>
</dbReference>
<dbReference type="InterPro" id="IPR038371">
    <property type="entry name" value="Cu_polyphenol_OxRdtase_sf"/>
</dbReference>
<dbReference type="InterPro" id="IPR011324">
    <property type="entry name" value="Cytotoxic_necrot_fac-like_cat"/>
</dbReference>
<dbReference type="NCBIfam" id="TIGR00726">
    <property type="entry name" value="peptidoglycan editing factor PgeF"/>
    <property type="match status" value="1"/>
</dbReference>
<dbReference type="PANTHER" id="PTHR30616:SF2">
    <property type="entry name" value="PURINE NUCLEOSIDE PHOSPHORYLASE LACC1"/>
    <property type="match status" value="1"/>
</dbReference>
<dbReference type="PANTHER" id="PTHR30616">
    <property type="entry name" value="UNCHARACTERIZED PROTEIN YFIH"/>
    <property type="match status" value="1"/>
</dbReference>
<dbReference type="Pfam" id="PF02578">
    <property type="entry name" value="Cu-oxidase_4"/>
    <property type="match status" value="1"/>
</dbReference>
<dbReference type="SUPFAM" id="SSF64438">
    <property type="entry name" value="CNF1/YfiH-like putative cysteine hydrolases"/>
    <property type="match status" value="1"/>
</dbReference>
<keyword id="KW-0186">Copper</keyword>
<keyword id="KW-0378">Hydrolase</keyword>
<keyword id="KW-0479">Metal-binding</keyword>
<keyword id="KW-0560">Oxidoreductase</keyword>
<keyword id="KW-1185">Reference proteome</keyword>
<keyword id="KW-0808">Transferase</keyword>
<keyword id="KW-0862">Zinc</keyword>
<proteinExistence type="inferred from homology"/>
<name>PURNU_RICPR</name>
<gene>
    <name type="ordered locus">RP494</name>
</gene>
<comment type="function">
    <text evidence="2">Purine nucleoside enzyme that catalyzes the phosphorolysis of adenosine and inosine nucleosides, yielding D-ribose 1-phosphate and the respective free bases, adenine and hypoxanthine. Also catalyzes the phosphorolysis of S-methyl-5'-thioadenosine into adenine and S-methyl-5-thio-alpha-D-ribose 1-phosphate. Also has adenosine deaminase activity.</text>
</comment>
<comment type="catalytic activity">
    <reaction evidence="2">
        <text>adenosine + phosphate = alpha-D-ribose 1-phosphate + adenine</text>
        <dbReference type="Rhea" id="RHEA:27642"/>
        <dbReference type="ChEBI" id="CHEBI:16335"/>
        <dbReference type="ChEBI" id="CHEBI:16708"/>
        <dbReference type="ChEBI" id="CHEBI:43474"/>
        <dbReference type="ChEBI" id="CHEBI:57720"/>
        <dbReference type="EC" id="2.4.2.1"/>
    </reaction>
    <physiologicalReaction direction="left-to-right" evidence="2">
        <dbReference type="Rhea" id="RHEA:27643"/>
    </physiologicalReaction>
</comment>
<comment type="catalytic activity">
    <reaction evidence="2">
        <text>S-methyl-5'-thioadenosine + phosphate = 5-(methylsulfanyl)-alpha-D-ribose 1-phosphate + adenine</text>
        <dbReference type="Rhea" id="RHEA:11852"/>
        <dbReference type="ChEBI" id="CHEBI:16708"/>
        <dbReference type="ChEBI" id="CHEBI:17509"/>
        <dbReference type="ChEBI" id="CHEBI:43474"/>
        <dbReference type="ChEBI" id="CHEBI:58533"/>
        <dbReference type="EC" id="2.4.2.28"/>
    </reaction>
    <physiologicalReaction direction="left-to-right" evidence="2">
        <dbReference type="Rhea" id="RHEA:11853"/>
    </physiologicalReaction>
</comment>
<comment type="catalytic activity">
    <reaction evidence="2">
        <text>inosine + phosphate = alpha-D-ribose 1-phosphate + hypoxanthine</text>
        <dbReference type="Rhea" id="RHEA:27646"/>
        <dbReference type="ChEBI" id="CHEBI:17368"/>
        <dbReference type="ChEBI" id="CHEBI:17596"/>
        <dbReference type="ChEBI" id="CHEBI:43474"/>
        <dbReference type="ChEBI" id="CHEBI:57720"/>
        <dbReference type="EC" id="2.4.2.1"/>
    </reaction>
    <physiologicalReaction direction="left-to-right" evidence="2">
        <dbReference type="Rhea" id="RHEA:27647"/>
    </physiologicalReaction>
</comment>
<comment type="catalytic activity">
    <reaction evidence="2">
        <text>adenosine + H2O + H(+) = inosine + NH4(+)</text>
        <dbReference type="Rhea" id="RHEA:24408"/>
        <dbReference type="ChEBI" id="CHEBI:15377"/>
        <dbReference type="ChEBI" id="CHEBI:15378"/>
        <dbReference type="ChEBI" id="CHEBI:16335"/>
        <dbReference type="ChEBI" id="CHEBI:17596"/>
        <dbReference type="ChEBI" id="CHEBI:28938"/>
        <dbReference type="EC" id="3.5.4.4"/>
    </reaction>
    <physiologicalReaction direction="left-to-right" evidence="2">
        <dbReference type="Rhea" id="RHEA:24409"/>
    </physiologicalReaction>
</comment>
<comment type="cofactor">
    <cofactor evidence="1">
        <name>Cu(2+)</name>
        <dbReference type="ChEBI" id="CHEBI:29036"/>
    </cofactor>
    <cofactor evidence="2">
        <name>Zn(2+)</name>
        <dbReference type="ChEBI" id="CHEBI:29105"/>
    </cofactor>
</comment>
<comment type="subunit">
    <text evidence="3">Homodimer.</text>
</comment>
<comment type="similarity">
    <text evidence="4">Belongs to the purine nucleoside phosphorylase YfiH/LACC1 family.</text>
</comment>
<sequence length="240" mass="27182">MEVLIHKSVYYKIFDKTFNNSSHRYIQENHSINEAEILANIESITNYFKAQDILILNQVHSNQIVNADEHIVTIPEADGSITTKKNLVLTVQSADCVPVLLASDDGKIIGVAHAGWQGSINNIISNIVTKMIEKGAKNLIAVIGPAIAQSSYEVDDKYYKTFLSKDINNKRFFINSIKENHYMFDLPAFVELKLNESGVKDIKNITEDTYTNPSKYPSKRRSYHMQVPYNEKILSAIVIK</sequence>